<keyword id="KW-0472">Membrane</keyword>
<keyword id="KW-0496">Mitochondrion</keyword>
<keyword id="KW-0999">Mitochondrion inner membrane</keyword>
<keyword id="KW-1185">Reference proteome</keyword>
<keyword id="KW-0677">Repeat</keyword>
<keyword id="KW-0812">Transmembrane</keyword>
<keyword id="KW-1133">Transmembrane helix</keyword>
<keyword id="KW-0813">Transport</keyword>
<organism>
    <name type="scientific">Meyerozyma guilliermondii (strain ATCC 6260 / CBS 566 / DSM 6381 / JCM 1539 / NBRC 10279 / NRRL Y-324)</name>
    <name type="common">Yeast</name>
    <name type="synonym">Candida guilliermondii</name>
    <dbReference type="NCBI Taxonomy" id="294746"/>
    <lineage>
        <taxon>Eukaryota</taxon>
        <taxon>Fungi</taxon>
        <taxon>Dikarya</taxon>
        <taxon>Ascomycota</taxon>
        <taxon>Saccharomycotina</taxon>
        <taxon>Pichiomycetes</taxon>
        <taxon>Debaryomycetaceae</taxon>
        <taxon>Meyerozyma</taxon>
    </lineage>
</organism>
<evidence type="ECO:0000250" key="1"/>
<evidence type="ECO:0000255" key="2"/>
<evidence type="ECO:0000305" key="3"/>
<reference key="1">
    <citation type="journal article" date="2009" name="Nature">
        <title>Evolution of pathogenicity and sexual reproduction in eight Candida genomes.</title>
        <authorList>
            <person name="Butler G."/>
            <person name="Rasmussen M.D."/>
            <person name="Lin M.F."/>
            <person name="Santos M.A.S."/>
            <person name="Sakthikumar S."/>
            <person name="Munro C.A."/>
            <person name="Rheinbay E."/>
            <person name="Grabherr M."/>
            <person name="Forche A."/>
            <person name="Reedy J.L."/>
            <person name="Agrafioti I."/>
            <person name="Arnaud M.B."/>
            <person name="Bates S."/>
            <person name="Brown A.J.P."/>
            <person name="Brunke S."/>
            <person name="Costanzo M.C."/>
            <person name="Fitzpatrick D.A."/>
            <person name="de Groot P.W.J."/>
            <person name="Harris D."/>
            <person name="Hoyer L.L."/>
            <person name="Hube B."/>
            <person name="Klis F.M."/>
            <person name="Kodira C."/>
            <person name="Lennard N."/>
            <person name="Logue M.E."/>
            <person name="Martin R."/>
            <person name="Neiman A.M."/>
            <person name="Nikolaou E."/>
            <person name="Quail M.A."/>
            <person name="Quinn J."/>
            <person name="Santos M.C."/>
            <person name="Schmitzberger F.F."/>
            <person name="Sherlock G."/>
            <person name="Shah P."/>
            <person name="Silverstein K.A.T."/>
            <person name="Skrzypek M.S."/>
            <person name="Soll D."/>
            <person name="Staggs R."/>
            <person name="Stansfield I."/>
            <person name="Stumpf M.P.H."/>
            <person name="Sudbery P.E."/>
            <person name="Srikantha T."/>
            <person name="Zeng Q."/>
            <person name="Berman J."/>
            <person name="Berriman M."/>
            <person name="Heitman J."/>
            <person name="Gow N.A.R."/>
            <person name="Lorenz M.C."/>
            <person name="Birren B.W."/>
            <person name="Kellis M."/>
            <person name="Cuomo C.A."/>
        </authorList>
    </citation>
    <scope>NUCLEOTIDE SEQUENCE [LARGE SCALE GENOMIC DNA]</scope>
    <source>
        <strain>ATCC 6260 / CBS 566 / DSM 6381 / JCM 1539 / NBRC 10279 / NRRL Y-324</strain>
    </source>
</reference>
<protein>
    <recommendedName>
        <fullName>Mitochondrial thiamine pyrophosphate carrier 1</fullName>
    </recommendedName>
</protein>
<comment type="function">
    <text evidence="1">Mitochondrial transporter that mediates uptake of thiamine pyrophosphate (ThPP) into mitochondria.</text>
</comment>
<comment type="subcellular location">
    <subcellularLocation>
        <location evidence="1">Mitochondrion inner membrane</location>
        <topology evidence="1">Multi-pass membrane protein</topology>
    </subcellularLocation>
</comment>
<comment type="similarity">
    <text evidence="3">Belongs to the mitochondrial carrier (TC 2.A.29) family.</text>
</comment>
<comment type="sequence caution" evidence="3">
    <conflict type="erroneous gene model prediction">
        <sequence resource="EMBL-CDS" id="EDK39082"/>
    </conflict>
</comment>
<sequence length="291" mass="31764">MATPREDHLKKGATASVYHTLVAGSVSGAVARAVTAPLDTVKIRLQLSNKSLGAHDGLRQTVVRIFKNEGIRAFWKGNVPAEIMYILYGATQFTSYSMFSKALTELETTYGFNLRPSNHSLIVGTSAGLTSLIVTYPFDLLRTRLAANSERHFLSMTAVIKQVRASGGLAGLYMGAKPTLLSLGLNSGLMFWTYEIAREVSAQYKDNIPFIEGFCGFFAGASSKGITFPLDTLRKRMQMRSSKTSIIGLARTILRREGLFGFYKGFGISLIKTAPTSAVSLFVYEVVLNGM</sequence>
<proteinExistence type="inferred from homology"/>
<dbReference type="EMBL" id="CH408157">
    <property type="protein sequence ID" value="EDK39082.2"/>
    <property type="status" value="ALT_SEQ"/>
    <property type="molecule type" value="Genomic_DNA"/>
</dbReference>
<dbReference type="RefSeq" id="XP_001485451.1">
    <property type="nucleotide sequence ID" value="XM_001485401.1"/>
</dbReference>
<dbReference type="SMR" id="A5DIS9"/>
<dbReference type="FunCoup" id="A5DIS9">
    <property type="interactions" value="39"/>
</dbReference>
<dbReference type="STRING" id="294746.A5DIS9"/>
<dbReference type="GeneID" id="5127197"/>
<dbReference type="KEGG" id="pgu:PGUG_03180"/>
<dbReference type="eggNOG" id="KOG0752">
    <property type="taxonomic scope" value="Eukaryota"/>
</dbReference>
<dbReference type="HOGENOM" id="CLU_015166_10_3_1"/>
<dbReference type="InParanoid" id="A5DIS9"/>
<dbReference type="OrthoDB" id="18574at2759"/>
<dbReference type="Proteomes" id="UP000001997">
    <property type="component" value="Unassembled WGS sequence"/>
</dbReference>
<dbReference type="GO" id="GO:0005743">
    <property type="term" value="C:mitochondrial inner membrane"/>
    <property type="evidence" value="ECO:0007669"/>
    <property type="project" value="UniProtKB-SubCell"/>
</dbReference>
<dbReference type="GO" id="GO:0055085">
    <property type="term" value="P:transmembrane transport"/>
    <property type="evidence" value="ECO:0007669"/>
    <property type="project" value="InterPro"/>
</dbReference>
<dbReference type="Gene3D" id="1.50.40.10">
    <property type="entry name" value="Mitochondrial carrier domain"/>
    <property type="match status" value="1"/>
</dbReference>
<dbReference type="InterPro" id="IPR002067">
    <property type="entry name" value="Mit_carrier"/>
</dbReference>
<dbReference type="InterPro" id="IPR018108">
    <property type="entry name" value="Mitochondrial_sb/sol_carrier"/>
</dbReference>
<dbReference type="InterPro" id="IPR023395">
    <property type="entry name" value="Mt_carrier_dom_sf"/>
</dbReference>
<dbReference type="PANTHER" id="PTHR24089">
    <property type="entry name" value="SOLUTE CARRIER FAMILY 25"/>
    <property type="match status" value="1"/>
</dbReference>
<dbReference type="Pfam" id="PF00153">
    <property type="entry name" value="Mito_carr"/>
    <property type="match status" value="3"/>
</dbReference>
<dbReference type="PRINTS" id="PR00926">
    <property type="entry name" value="MITOCARRIER"/>
</dbReference>
<dbReference type="SUPFAM" id="SSF103506">
    <property type="entry name" value="Mitochondrial carrier"/>
    <property type="match status" value="1"/>
</dbReference>
<dbReference type="PROSITE" id="PS50920">
    <property type="entry name" value="SOLCAR"/>
    <property type="match status" value="3"/>
</dbReference>
<accession>A5DIS9</accession>
<gene>
    <name type="primary">TPC1</name>
    <name type="ORF">PGUG_03180</name>
</gene>
<feature type="chain" id="PRO_0000320472" description="Mitochondrial thiamine pyrophosphate carrier 1">
    <location>
        <begin position="1"/>
        <end position="291"/>
    </location>
</feature>
<feature type="transmembrane region" description="Helical; Name=1" evidence="2">
    <location>
        <begin position="12"/>
        <end position="31"/>
    </location>
</feature>
<feature type="transmembrane region" description="Helical; Name=2" evidence="2">
    <location>
        <begin position="83"/>
        <end position="99"/>
    </location>
</feature>
<feature type="transmembrane region" description="Helical; Name=3" evidence="2">
    <location>
        <begin position="120"/>
        <end position="141"/>
    </location>
</feature>
<feature type="transmembrane region" description="Helical; Name=4" evidence="2">
    <location>
        <begin position="167"/>
        <end position="191"/>
    </location>
</feature>
<feature type="transmembrane region" description="Helical; Name=5" evidence="2">
    <location>
        <begin position="214"/>
        <end position="230"/>
    </location>
</feature>
<feature type="transmembrane region" description="Helical; Name=6" evidence="2">
    <location>
        <begin position="265"/>
        <end position="282"/>
    </location>
</feature>
<feature type="repeat" description="Solcar 1">
    <location>
        <begin position="15"/>
        <end position="102"/>
    </location>
</feature>
<feature type="repeat" description="Solcar 2">
    <location>
        <begin position="115"/>
        <end position="200"/>
    </location>
</feature>
<feature type="repeat" description="Solcar 3">
    <location>
        <begin position="207"/>
        <end position="290"/>
    </location>
</feature>
<name>TPC1_PICGU</name>